<dbReference type="EMBL" id="AL591984">
    <property type="protein sequence ID" value="CAD01067.1"/>
    <property type="molecule type" value="Genomic_DNA"/>
</dbReference>
<dbReference type="EMBL" id="AF104228">
    <property type="protein sequence ID" value="AAF04771.1"/>
    <property type="molecule type" value="Genomic_DNA"/>
</dbReference>
<dbReference type="PIR" id="AE1431">
    <property type="entry name" value="AE1431"/>
</dbReference>
<dbReference type="RefSeq" id="NP_466376.1">
    <property type="nucleotide sequence ID" value="NC_003210.1"/>
</dbReference>
<dbReference type="SMR" id="Q8Y3I2"/>
<dbReference type="STRING" id="169963.gene:17595572"/>
<dbReference type="PaxDb" id="169963-lmo2854"/>
<dbReference type="DNASU" id="986378"/>
<dbReference type="EnsemblBacteria" id="CAD01067">
    <property type="protein sequence ID" value="CAD01067"/>
    <property type="gene ID" value="CAD01067"/>
</dbReference>
<dbReference type="GeneID" id="986378"/>
<dbReference type="KEGG" id="lmo:lmo2854"/>
<dbReference type="PATRIC" id="fig|169963.11.peg.2925"/>
<dbReference type="eggNOG" id="COG0706">
    <property type="taxonomic scope" value="Bacteria"/>
</dbReference>
<dbReference type="HOGENOM" id="CLU_036138_5_0_9"/>
<dbReference type="OrthoDB" id="9780552at2"/>
<dbReference type="PhylomeDB" id="Q8Y3I2"/>
<dbReference type="BioCyc" id="LMON169963:LMO2854-MONOMER"/>
<dbReference type="Proteomes" id="UP000000817">
    <property type="component" value="Chromosome"/>
</dbReference>
<dbReference type="GO" id="GO:0005886">
    <property type="term" value="C:plasma membrane"/>
    <property type="evidence" value="ECO:0000318"/>
    <property type="project" value="GO_Central"/>
</dbReference>
<dbReference type="GO" id="GO:0032977">
    <property type="term" value="F:membrane insertase activity"/>
    <property type="evidence" value="ECO:0000318"/>
    <property type="project" value="GO_Central"/>
</dbReference>
<dbReference type="GO" id="GO:0051205">
    <property type="term" value="P:protein insertion into membrane"/>
    <property type="evidence" value="ECO:0000318"/>
    <property type="project" value="GO_Central"/>
</dbReference>
<dbReference type="GO" id="GO:0015031">
    <property type="term" value="P:protein transport"/>
    <property type="evidence" value="ECO:0007669"/>
    <property type="project" value="UniProtKB-KW"/>
</dbReference>
<dbReference type="CDD" id="cd20070">
    <property type="entry name" value="5TM_YidC_Alb3"/>
    <property type="match status" value="1"/>
</dbReference>
<dbReference type="HAMAP" id="MF_01811">
    <property type="entry name" value="YidC_type2"/>
    <property type="match status" value="1"/>
</dbReference>
<dbReference type="InterPro" id="IPR001708">
    <property type="entry name" value="YidC/ALB3/OXA1/COX18"/>
</dbReference>
<dbReference type="InterPro" id="IPR028055">
    <property type="entry name" value="YidC/Oxa/ALB_C"/>
</dbReference>
<dbReference type="InterPro" id="IPR023060">
    <property type="entry name" value="YidC/YidC1/YidC2_Firmicutes"/>
</dbReference>
<dbReference type="InterPro" id="IPR047196">
    <property type="entry name" value="YidC_ALB_C"/>
</dbReference>
<dbReference type="NCBIfam" id="TIGR03592">
    <property type="entry name" value="yidC_oxa1_cterm"/>
    <property type="match status" value="1"/>
</dbReference>
<dbReference type="PANTHER" id="PTHR12428:SF65">
    <property type="entry name" value="CYTOCHROME C OXIDASE ASSEMBLY PROTEIN COX18, MITOCHONDRIAL"/>
    <property type="match status" value="1"/>
</dbReference>
<dbReference type="PANTHER" id="PTHR12428">
    <property type="entry name" value="OXA1"/>
    <property type="match status" value="1"/>
</dbReference>
<dbReference type="Pfam" id="PF02096">
    <property type="entry name" value="60KD_IMP"/>
    <property type="match status" value="1"/>
</dbReference>
<dbReference type="PRINTS" id="PR00701">
    <property type="entry name" value="60KDINNERMP"/>
</dbReference>
<dbReference type="PROSITE" id="PS51257">
    <property type="entry name" value="PROKAR_LIPOPROTEIN"/>
    <property type="match status" value="1"/>
</dbReference>
<proteinExistence type="inferred from homology"/>
<accession>Q8Y3I2</accession>
<accession>Q9RQH4</accession>
<sequence length="287" mass="32500">MKKKKRFKQKLLIASLVIGLMAVLSGCGYSTDPITSESTGFWSHYIVFPLSWTITWFSDLFGGSYAVGIIVVTILIRLLIMPLMIKQLKSQKAMTNLQPKIKELQEKYSSKDNETKQKLQQETMRLYQENSVNPMMGCLPLLIQMPILLGFYQAISRTAEIKTDSFLWMQLGNPDPYYILPVVAALTTFLSSKISMMGQTQQNKSMAMIVYIMPVMILFMGITLPSALALYWIIGNIFTVFQTLLINNPFKNKREQEALAAAQVAEDRLKKKAANMKASKKGGKKRK</sequence>
<name>YIDC2_LISMO</name>
<feature type="signal peptide" evidence="1">
    <location>
        <begin position="1"/>
        <end position="26"/>
    </location>
</feature>
<feature type="chain" id="PRO_0000020389" description="Membrane protein insertase YidC 2">
    <location>
        <begin position="27"/>
        <end position="287"/>
    </location>
</feature>
<feature type="transmembrane region" description="Helical" evidence="1">
    <location>
        <begin position="65"/>
        <end position="85"/>
    </location>
</feature>
<feature type="transmembrane region" description="Helical" evidence="1">
    <location>
        <begin position="135"/>
        <end position="155"/>
    </location>
</feature>
<feature type="transmembrane region" description="Helical" evidence="1">
    <location>
        <begin position="178"/>
        <end position="198"/>
    </location>
</feature>
<feature type="transmembrane region" description="Helical" evidence="1">
    <location>
        <begin position="207"/>
        <end position="224"/>
    </location>
</feature>
<feature type="transmembrane region" description="Helical" evidence="1">
    <location>
        <begin position="228"/>
        <end position="250"/>
    </location>
</feature>
<feature type="lipid moiety-binding region" description="N-palmitoyl cysteine" evidence="1">
    <location>
        <position position="27"/>
    </location>
</feature>
<feature type="lipid moiety-binding region" description="S-diacylglycerol cysteine" evidence="1">
    <location>
        <position position="27"/>
    </location>
</feature>
<evidence type="ECO:0000255" key="1">
    <source>
        <dbReference type="HAMAP-Rule" id="MF_01811"/>
    </source>
</evidence>
<protein>
    <recommendedName>
        <fullName evidence="1">Membrane protein insertase YidC 2</fullName>
    </recommendedName>
    <alternativeName>
        <fullName evidence="1">Foldase YidC 2</fullName>
    </alternativeName>
    <alternativeName>
        <fullName evidence="1">Membrane integrase YidC 2</fullName>
    </alternativeName>
    <alternativeName>
        <fullName evidence="1">Membrane protein YidC 2</fullName>
    </alternativeName>
</protein>
<comment type="function">
    <text evidence="1">Required for the insertion and/or proper folding and/or complex formation of integral membrane proteins into the membrane. Involved in integration of membrane proteins that insert both dependently and independently of the Sec translocase complex, as well as at least some lipoproteins.</text>
</comment>
<comment type="subcellular location">
    <subcellularLocation>
        <location evidence="1">Cell membrane</location>
        <topology evidence="1">Multi-pass membrane protein</topology>
    </subcellularLocation>
</comment>
<comment type="similarity">
    <text evidence="1">Belongs to the OXA1/ALB3/YidC family. Type 2 subfamily.</text>
</comment>
<reference key="1">
    <citation type="journal article" date="2001" name="Science">
        <title>Comparative genomics of Listeria species.</title>
        <authorList>
            <person name="Glaser P."/>
            <person name="Frangeul L."/>
            <person name="Buchrieser C."/>
            <person name="Rusniok C."/>
            <person name="Amend A."/>
            <person name="Baquero F."/>
            <person name="Berche P."/>
            <person name="Bloecker H."/>
            <person name="Brandt P."/>
            <person name="Chakraborty T."/>
            <person name="Charbit A."/>
            <person name="Chetouani F."/>
            <person name="Couve E."/>
            <person name="de Daruvar A."/>
            <person name="Dehoux P."/>
            <person name="Domann E."/>
            <person name="Dominguez-Bernal G."/>
            <person name="Duchaud E."/>
            <person name="Durant L."/>
            <person name="Dussurget O."/>
            <person name="Entian K.-D."/>
            <person name="Fsihi H."/>
            <person name="Garcia-del Portillo F."/>
            <person name="Garrido P."/>
            <person name="Gautier L."/>
            <person name="Goebel W."/>
            <person name="Gomez-Lopez N."/>
            <person name="Hain T."/>
            <person name="Hauf J."/>
            <person name="Jackson D."/>
            <person name="Jones L.-M."/>
            <person name="Kaerst U."/>
            <person name="Kreft J."/>
            <person name="Kuhn M."/>
            <person name="Kunst F."/>
            <person name="Kurapkat G."/>
            <person name="Madueno E."/>
            <person name="Maitournam A."/>
            <person name="Mata Vicente J."/>
            <person name="Ng E."/>
            <person name="Nedjari H."/>
            <person name="Nordsiek G."/>
            <person name="Novella S."/>
            <person name="de Pablos B."/>
            <person name="Perez-Diaz J.-C."/>
            <person name="Purcell R."/>
            <person name="Remmel B."/>
            <person name="Rose M."/>
            <person name="Schlueter T."/>
            <person name="Simoes N."/>
            <person name="Tierrez A."/>
            <person name="Vazquez-Boland J.-A."/>
            <person name="Voss H."/>
            <person name="Wehland J."/>
            <person name="Cossart P."/>
        </authorList>
    </citation>
    <scope>NUCLEOTIDE SEQUENCE [LARGE SCALE GENOMIC DNA]</scope>
    <source>
        <strain>ATCC BAA-679 / EGD-e</strain>
    </source>
</reference>
<reference key="2">
    <citation type="journal article" date="2000" name="Microbiology">
        <title>Identification of new loci involved in adhesion of Listeria monocytogenes to eukaryotic cells.</title>
        <authorList>
            <person name="Milohanic E."/>
            <person name="Pron B."/>
            <person name="Berche P."/>
            <person name="Gaillard J.-L."/>
        </authorList>
    </citation>
    <scope>NUCLEOTIDE SEQUENCE [GENOMIC DNA] OF 86-173</scope>
    <source>
        <strain>ATCC BAA-679 / EGD-e</strain>
    </source>
</reference>
<gene>
    <name evidence="1" type="primary">yidC2</name>
    <name type="ordered locus">lmo2854</name>
</gene>
<keyword id="KW-1003">Cell membrane</keyword>
<keyword id="KW-0143">Chaperone</keyword>
<keyword id="KW-0449">Lipoprotein</keyword>
<keyword id="KW-0472">Membrane</keyword>
<keyword id="KW-0564">Palmitate</keyword>
<keyword id="KW-0653">Protein transport</keyword>
<keyword id="KW-1185">Reference proteome</keyword>
<keyword id="KW-0732">Signal</keyword>
<keyword id="KW-0812">Transmembrane</keyword>
<keyword id="KW-1133">Transmembrane helix</keyword>
<keyword id="KW-0813">Transport</keyword>
<organism>
    <name type="scientific">Listeria monocytogenes serovar 1/2a (strain ATCC BAA-679 / EGD-e)</name>
    <dbReference type="NCBI Taxonomy" id="169963"/>
    <lineage>
        <taxon>Bacteria</taxon>
        <taxon>Bacillati</taxon>
        <taxon>Bacillota</taxon>
        <taxon>Bacilli</taxon>
        <taxon>Bacillales</taxon>
        <taxon>Listeriaceae</taxon>
        <taxon>Listeria</taxon>
    </lineage>
</organism>